<sequence length="196" mass="20784">MIDRLRGQLVEKDPEGVVVDCGGVGYRAAAPLSTLRALPAVGEECVVHTRMVVREDAMLLFGFATREEREAFDALTSVSKVGPRLALAVLSAMTPGQMMEAAARGDVHRFAAVPGLGRKTAERLVLELRGRELAAAGGGGGVAAGEGDGPFMEAREALTGLGYSLEEAERALRDVPPQETVEQYIKAALRKIGGRR</sequence>
<feature type="chain" id="PRO_1000002541" description="Holliday junction branch migration complex subunit RuvA">
    <location>
        <begin position="1"/>
        <end position="196"/>
    </location>
</feature>
<feature type="region of interest" description="Domain I" evidence="1">
    <location>
        <begin position="1"/>
        <end position="64"/>
    </location>
</feature>
<feature type="region of interest" description="Domain II" evidence="1">
    <location>
        <begin position="65"/>
        <end position="143"/>
    </location>
</feature>
<feature type="region of interest" description="Flexible linker" evidence="1">
    <location>
        <begin position="144"/>
        <end position="153"/>
    </location>
</feature>
<feature type="region of interest" description="Domain III" evidence="1">
    <location>
        <begin position="153"/>
        <end position="196"/>
    </location>
</feature>
<accession>Q1AWE1</accession>
<keyword id="KW-0963">Cytoplasm</keyword>
<keyword id="KW-0227">DNA damage</keyword>
<keyword id="KW-0233">DNA recombination</keyword>
<keyword id="KW-0234">DNA repair</keyword>
<keyword id="KW-0238">DNA-binding</keyword>
<keyword id="KW-1185">Reference proteome</keyword>
<organism>
    <name type="scientific">Rubrobacter xylanophilus (strain DSM 9941 / JCM 11954 / NBRC 16129 / PRD-1)</name>
    <dbReference type="NCBI Taxonomy" id="266117"/>
    <lineage>
        <taxon>Bacteria</taxon>
        <taxon>Bacillati</taxon>
        <taxon>Actinomycetota</taxon>
        <taxon>Rubrobacteria</taxon>
        <taxon>Rubrobacterales</taxon>
        <taxon>Rubrobacteraceae</taxon>
        <taxon>Rubrobacter</taxon>
    </lineage>
</organism>
<gene>
    <name evidence="1" type="primary">ruvA</name>
    <name type="ordered locus">Rxyl_1323</name>
</gene>
<dbReference type="EMBL" id="CP000386">
    <property type="protein sequence ID" value="ABG04287.1"/>
    <property type="molecule type" value="Genomic_DNA"/>
</dbReference>
<dbReference type="RefSeq" id="WP_011564304.1">
    <property type="nucleotide sequence ID" value="NC_008148.1"/>
</dbReference>
<dbReference type="SMR" id="Q1AWE1"/>
<dbReference type="STRING" id="266117.Rxyl_1323"/>
<dbReference type="KEGG" id="rxy:Rxyl_1323"/>
<dbReference type="eggNOG" id="COG0632">
    <property type="taxonomic scope" value="Bacteria"/>
</dbReference>
<dbReference type="HOGENOM" id="CLU_087936_0_0_11"/>
<dbReference type="OrthoDB" id="5293449at2"/>
<dbReference type="PhylomeDB" id="Q1AWE1"/>
<dbReference type="Proteomes" id="UP000006637">
    <property type="component" value="Chromosome"/>
</dbReference>
<dbReference type="GO" id="GO:0005737">
    <property type="term" value="C:cytoplasm"/>
    <property type="evidence" value="ECO:0007669"/>
    <property type="project" value="UniProtKB-SubCell"/>
</dbReference>
<dbReference type="GO" id="GO:0009379">
    <property type="term" value="C:Holliday junction helicase complex"/>
    <property type="evidence" value="ECO:0007669"/>
    <property type="project" value="InterPro"/>
</dbReference>
<dbReference type="GO" id="GO:0048476">
    <property type="term" value="C:Holliday junction resolvase complex"/>
    <property type="evidence" value="ECO:0007669"/>
    <property type="project" value="UniProtKB-UniRule"/>
</dbReference>
<dbReference type="GO" id="GO:0005524">
    <property type="term" value="F:ATP binding"/>
    <property type="evidence" value="ECO:0007669"/>
    <property type="project" value="InterPro"/>
</dbReference>
<dbReference type="GO" id="GO:0000400">
    <property type="term" value="F:four-way junction DNA binding"/>
    <property type="evidence" value="ECO:0007669"/>
    <property type="project" value="UniProtKB-UniRule"/>
</dbReference>
<dbReference type="GO" id="GO:0009378">
    <property type="term" value="F:four-way junction helicase activity"/>
    <property type="evidence" value="ECO:0007669"/>
    <property type="project" value="InterPro"/>
</dbReference>
<dbReference type="GO" id="GO:0006310">
    <property type="term" value="P:DNA recombination"/>
    <property type="evidence" value="ECO:0007669"/>
    <property type="project" value="UniProtKB-UniRule"/>
</dbReference>
<dbReference type="GO" id="GO:0006281">
    <property type="term" value="P:DNA repair"/>
    <property type="evidence" value="ECO:0007669"/>
    <property type="project" value="UniProtKB-UniRule"/>
</dbReference>
<dbReference type="CDD" id="cd14332">
    <property type="entry name" value="UBA_RuvA_C"/>
    <property type="match status" value="1"/>
</dbReference>
<dbReference type="Gene3D" id="1.10.150.20">
    <property type="entry name" value="5' to 3' exonuclease, C-terminal subdomain"/>
    <property type="match status" value="1"/>
</dbReference>
<dbReference type="Gene3D" id="1.10.8.10">
    <property type="entry name" value="DNA helicase RuvA subunit, C-terminal domain"/>
    <property type="match status" value="1"/>
</dbReference>
<dbReference type="Gene3D" id="2.40.50.140">
    <property type="entry name" value="Nucleic acid-binding proteins"/>
    <property type="match status" value="1"/>
</dbReference>
<dbReference type="HAMAP" id="MF_00031">
    <property type="entry name" value="DNA_HJ_migration_RuvA"/>
    <property type="match status" value="1"/>
</dbReference>
<dbReference type="InterPro" id="IPR013849">
    <property type="entry name" value="DNA_helicase_Holl-junc_RuvA_I"/>
</dbReference>
<dbReference type="InterPro" id="IPR003583">
    <property type="entry name" value="Hlx-hairpin-Hlx_DNA-bd_motif"/>
</dbReference>
<dbReference type="InterPro" id="IPR012340">
    <property type="entry name" value="NA-bd_OB-fold"/>
</dbReference>
<dbReference type="InterPro" id="IPR000085">
    <property type="entry name" value="RuvA"/>
</dbReference>
<dbReference type="InterPro" id="IPR010994">
    <property type="entry name" value="RuvA_2-like"/>
</dbReference>
<dbReference type="InterPro" id="IPR011114">
    <property type="entry name" value="RuvA_C"/>
</dbReference>
<dbReference type="InterPro" id="IPR036267">
    <property type="entry name" value="RuvA_C_sf"/>
</dbReference>
<dbReference type="NCBIfam" id="TIGR00084">
    <property type="entry name" value="ruvA"/>
    <property type="match status" value="1"/>
</dbReference>
<dbReference type="Pfam" id="PF14520">
    <property type="entry name" value="HHH_5"/>
    <property type="match status" value="1"/>
</dbReference>
<dbReference type="Pfam" id="PF07499">
    <property type="entry name" value="RuvA_C"/>
    <property type="match status" value="1"/>
</dbReference>
<dbReference type="Pfam" id="PF01330">
    <property type="entry name" value="RuvA_N"/>
    <property type="match status" value="1"/>
</dbReference>
<dbReference type="SMART" id="SM00278">
    <property type="entry name" value="HhH1"/>
    <property type="match status" value="2"/>
</dbReference>
<dbReference type="SUPFAM" id="SSF46929">
    <property type="entry name" value="DNA helicase RuvA subunit, C-terminal domain"/>
    <property type="match status" value="1"/>
</dbReference>
<dbReference type="SUPFAM" id="SSF50249">
    <property type="entry name" value="Nucleic acid-binding proteins"/>
    <property type="match status" value="1"/>
</dbReference>
<dbReference type="SUPFAM" id="SSF47781">
    <property type="entry name" value="RuvA domain 2-like"/>
    <property type="match status" value="1"/>
</dbReference>
<proteinExistence type="inferred from homology"/>
<reference key="1">
    <citation type="submission" date="2006-06" db="EMBL/GenBank/DDBJ databases">
        <title>Complete sequence of Rubrobacter xylanophilus DSM 9941.</title>
        <authorList>
            <consortium name="US DOE Joint Genome Institute"/>
            <person name="Copeland A."/>
            <person name="Lucas S."/>
            <person name="Lapidus A."/>
            <person name="Barry K."/>
            <person name="Detter J.C."/>
            <person name="Glavina del Rio T."/>
            <person name="Hammon N."/>
            <person name="Israni S."/>
            <person name="Dalin E."/>
            <person name="Tice H."/>
            <person name="Pitluck S."/>
            <person name="Munk A.C."/>
            <person name="Brettin T."/>
            <person name="Bruce D."/>
            <person name="Han C."/>
            <person name="Tapia R."/>
            <person name="Gilna P."/>
            <person name="Schmutz J."/>
            <person name="Larimer F."/>
            <person name="Land M."/>
            <person name="Hauser L."/>
            <person name="Kyrpides N."/>
            <person name="Lykidis A."/>
            <person name="da Costa M.S."/>
            <person name="Rainey F.A."/>
            <person name="Empadinhas N."/>
            <person name="Jolivet E."/>
            <person name="Battista J.R."/>
            <person name="Richardson P."/>
        </authorList>
    </citation>
    <scope>NUCLEOTIDE SEQUENCE [LARGE SCALE GENOMIC DNA]</scope>
    <source>
        <strain>DSM 9941 / JCM 11954 / NBRC 16129 / PRD-1</strain>
    </source>
</reference>
<comment type="function">
    <text evidence="1">The RuvA-RuvB-RuvC complex processes Holliday junction (HJ) DNA during genetic recombination and DNA repair, while the RuvA-RuvB complex plays an important role in the rescue of blocked DNA replication forks via replication fork reversal (RFR). RuvA specifically binds to HJ cruciform DNA, conferring on it an open structure. The RuvB hexamer acts as an ATP-dependent pump, pulling dsDNA into and through the RuvAB complex. HJ branch migration allows RuvC to scan DNA until it finds its consensus sequence, where it cleaves and resolves the cruciform DNA.</text>
</comment>
<comment type="subunit">
    <text evidence="1">Homotetramer. Forms an RuvA(8)-RuvB(12)-Holliday junction (HJ) complex. HJ DNA is sandwiched between 2 RuvA tetramers; dsDNA enters through RuvA and exits via RuvB. An RuvB hexamer assembles on each DNA strand where it exits the tetramer. Each RuvB hexamer is contacted by two RuvA subunits (via domain III) on 2 adjacent RuvB subunits; this complex drives branch migration. In the full resolvosome a probable DNA-RuvA(4)-RuvB(12)-RuvC(2) complex forms which resolves the HJ.</text>
</comment>
<comment type="subcellular location">
    <subcellularLocation>
        <location evidence="1">Cytoplasm</location>
    </subcellularLocation>
</comment>
<comment type="domain">
    <text evidence="1">Has three domains with a flexible linker between the domains II and III and assumes an 'L' shape. Domain III is highly mobile and contacts RuvB.</text>
</comment>
<comment type="similarity">
    <text evidence="1">Belongs to the RuvA family.</text>
</comment>
<name>RUVA_RUBXD</name>
<protein>
    <recommendedName>
        <fullName evidence="1">Holliday junction branch migration complex subunit RuvA</fullName>
    </recommendedName>
</protein>
<evidence type="ECO:0000255" key="1">
    <source>
        <dbReference type="HAMAP-Rule" id="MF_00031"/>
    </source>
</evidence>